<dbReference type="EC" id="2.7.7.6" evidence="1"/>
<dbReference type="EMBL" id="CR767821">
    <property type="protein sequence ID" value="CAH57888.1"/>
    <property type="molecule type" value="Genomic_DNA"/>
</dbReference>
<dbReference type="EMBL" id="CR925678">
    <property type="protein sequence ID" value="CAI26665.1"/>
    <property type="molecule type" value="Genomic_DNA"/>
</dbReference>
<dbReference type="RefSeq" id="WP_011154856.1">
    <property type="nucleotide sequence ID" value="NC_005295.2"/>
</dbReference>
<dbReference type="SMR" id="Q5HC05"/>
<dbReference type="GeneID" id="33058150"/>
<dbReference type="KEGG" id="eru:Erum1720"/>
<dbReference type="KEGG" id="erw:ERWE_CDS_01710"/>
<dbReference type="eggNOG" id="COG0085">
    <property type="taxonomic scope" value="Bacteria"/>
</dbReference>
<dbReference type="HOGENOM" id="CLU_000524_4_1_5"/>
<dbReference type="Proteomes" id="UP000001021">
    <property type="component" value="Chromosome"/>
</dbReference>
<dbReference type="GO" id="GO:0000428">
    <property type="term" value="C:DNA-directed RNA polymerase complex"/>
    <property type="evidence" value="ECO:0007669"/>
    <property type="project" value="UniProtKB-KW"/>
</dbReference>
<dbReference type="GO" id="GO:0003677">
    <property type="term" value="F:DNA binding"/>
    <property type="evidence" value="ECO:0007669"/>
    <property type="project" value="UniProtKB-UniRule"/>
</dbReference>
<dbReference type="GO" id="GO:0003899">
    <property type="term" value="F:DNA-directed RNA polymerase activity"/>
    <property type="evidence" value="ECO:0007669"/>
    <property type="project" value="UniProtKB-UniRule"/>
</dbReference>
<dbReference type="GO" id="GO:0032549">
    <property type="term" value="F:ribonucleoside binding"/>
    <property type="evidence" value="ECO:0007669"/>
    <property type="project" value="InterPro"/>
</dbReference>
<dbReference type="GO" id="GO:0006351">
    <property type="term" value="P:DNA-templated transcription"/>
    <property type="evidence" value="ECO:0007669"/>
    <property type="project" value="UniProtKB-UniRule"/>
</dbReference>
<dbReference type="CDD" id="cd00653">
    <property type="entry name" value="RNA_pol_B_RPB2"/>
    <property type="match status" value="1"/>
</dbReference>
<dbReference type="Gene3D" id="2.40.50.100">
    <property type="match status" value="1"/>
</dbReference>
<dbReference type="Gene3D" id="2.40.50.150">
    <property type="match status" value="1"/>
</dbReference>
<dbReference type="Gene3D" id="3.90.1100.10">
    <property type="match status" value="2"/>
</dbReference>
<dbReference type="Gene3D" id="2.30.150.10">
    <property type="entry name" value="DNA-directed RNA polymerase, beta subunit, external 1 domain"/>
    <property type="match status" value="1"/>
</dbReference>
<dbReference type="Gene3D" id="2.40.270.10">
    <property type="entry name" value="DNA-directed RNA polymerase, subunit 2, domain 6"/>
    <property type="match status" value="1"/>
</dbReference>
<dbReference type="Gene3D" id="3.90.1800.10">
    <property type="entry name" value="RNA polymerase alpha subunit dimerisation domain"/>
    <property type="match status" value="1"/>
</dbReference>
<dbReference type="HAMAP" id="MF_01321">
    <property type="entry name" value="RNApol_bact_RpoB"/>
    <property type="match status" value="1"/>
</dbReference>
<dbReference type="InterPro" id="IPR042107">
    <property type="entry name" value="DNA-dir_RNA_pol_bsu_ext_1_sf"/>
</dbReference>
<dbReference type="InterPro" id="IPR019462">
    <property type="entry name" value="DNA-dir_RNA_pol_bsu_external_1"/>
</dbReference>
<dbReference type="InterPro" id="IPR015712">
    <property type="entry name" value="DNA-dir_RNA_pol_su2"/>
</dbReference>
<dbReference type="InterPro" id="IPR007120">
    <property type="entry name" value="DNA-dir_RNAP_su2_dom"/>
</dbReference>
<dbReference type="InterPro" id="IPR037033">
    <property type="entry name" value="DNA-dir_RNAP_su2_hyb_sf"/>
</dbReference>
<dbReference type="InterPro" id="IPR010243">
    <property type="entry name" value="RNA_pol_bsu_bac"/>
</dbReference>
<dbReference type="InterPro" id="IPR007121">
    <property type="entry name" value="RNA_pol_bsu_CS"/>
</dbReference>
<dbReference type="InterPro" id="IPR007644">
    <property type="entry name" value="RNA_pol_bsu_protrusion"/>
</dbReference>
<dbReference type="InterPro" id="IPR007642">
    <property type="entry name" value="RNA_pol_Rpb2_2"/>
</dbReference>
<dbReference type="InterPro" id="IPR007645">
    <property type="entry name" value="RNA_pol_Rpb2_3"/>
</dbReference>
<dbReference type="InterPro" id="IPR007641">
    <property type="entry name" value="RNA_pol_Rpb2_7"/>
</dbReference>
<dbReference type="InterPro" id="IPR014724">
    <property type="entry name" value="RNA_pol_RPB2_OB-fold"/>
</dbReference>
<dbReference type="NCBIfam" id="NF001616">
    <property type="entry name" value="PRK00405.1"/>
    <property type="match status" value="1"/>
</dbReference>
<dbReference type="NCBIfam" id="TIGR02013">
    <property type="entry name" value="rpoB"/>
    <property type="match status" value="1"/>
</dbReference>
<dbReference type="PANTHER" id="PTHR20856">
    <property type="entry name" value="DNA-DIRECTED RNA POLYMERASE I SUBUNIT 2"/>
    <property type="match status" value="1"/>
</dbReference>
<dbReference type="Pfam" id="PF04563">
    <property type="entry name" value="RNA_pol_Rpb2_1"/>
    <property type="match status" value="1"/>
</dbReference>
<dbReference type="Pfam" id="PF04561">
    <property type="entry name" value="RNA_pol_Rpb2_2"/>
    <property type="match status" value="2"/>
</dbReference>
<dbReference type="Pfam" id="PF04565">
    <property type="entry name" value="RNA_pol_Rpb2_3"/>
    <property type="match status" value="1"/>
</dbReference>
<dbReference type="Pfam" id="PF10385">
    <property type="entry name" value="RNA_pol_Rpb2_45"/>
    <property type="match status" value="1"/>
</dbReference>
<dbReference type="Pfam" id="PF00562">
    <property type="entry name" value="RNA_pol_Rpb2_6"/>
    <property type="match status" value="1"/>
</dbReference>
<dbReference type="Pfam" id="PF04560">
    <property type="entry name" value="RNA_pol_Rpb2_7"/>
    <property type="match status" value="1"/>
</dbReference>
<dbReference type="SUPFAM" id="SSF64484">
    <property type="entry name" value="beta and beta-prime subunits of DNA dependent RNA-polymerase"/>
    <property type="match status" value="1"/>
</dbReference>
<dbReference type="PROSITE" id="PS01166">
    <property type="entry name" value="RNA_POL_BETA"/>
    <property type="match status" value="1"/>
</dbReference>
<sequence>MSSSVTSKYVLNSFSSVPRLSYAKSIDIKDSLTDLIKIQRDSYNAFIGIDQDVDSGIKNIFQSMFPIQDLLGRAVLQFVSYSIGEPQYDEYECIKRGITYSVPIRIVLRFIVWKVQEVSFKEVKYVVDEETSEKSIKYIKEQEVSIGDLPTMTSYGTFIINGVERVIVSQMHRSPGVFFDSDKGKTYSSGKLIYLARIIPYRGSWLDFEFDIKDILYFRIDRKRKLPVSLLLRALGLSNSEILDTFYDKIRYERCENGWVVPFVVDRFRGVRLSYDLVDIDGNVLVKANTRITLRLAKKLASDGLKKYLVPFAEIQGLFIANDLVDPASNVMIMCAGESITSEHINKLKLFDINEIFILNIDFLTVGPYILNTLFLDKNISYEDALFEIYKVLRSGESPSLDTMKAFFDGLFFEKERYDLSTVGRIKLNDHLGLDISEDVTVLTKDDIIHVIKKLVLLRDGEGFVDDIDHLGNRRVRSVGEFIENQFRIGILRLERMIMDYMSSVNFDNAMPCDFVNPKVLATVLKDFFSSSQLSQFMDQTNPLSEVTHKRRLSALGPGGLTRERAGFEVRDVHPTHYGRICPIETPEGQNIGLISSLAIYARINKHGFIESPYRKVDNGVVTDKVEYLLAMQESNYYIADASATLDENNRFVDDMLYCRHDGNFVMVKREQVDYIDVSPKQIVSVAASLIPFLENNDANRALMGSNMQRQAVPLLKADAPLVGTGMESIVAAGSGTVVLAKRSGIVHRVDGLYIVIRAFDKEKNEYLGVDIYNLRKFQRSNHNTCINQKPLVKPGDYVRENDVIADGSAIDQGELALGKNVLVAFMSWQGYNFEDSIVISSEVVKKDVFTSIHIEEFECVVRDTALGPEKIMRSIPDVNEDSLSHLDDVGIVNVGAEVSAGDILVGKVTPRPPVSLPPETKLLVTIFGEKVFDCVDSSLYLPIDVEGTVVDVHVFVRRGVEENDRSLLIKQNEINGFIKERDYEIDVVSEYFYDELKRVLVNTNTEYNNQNIEDYLKSIPQKSWWDIKLSDESVLSQISDLKEKFDSMIENAHSKFDQKIDKLNYGYDLPQGVLCIVKVFVAVKHNLQPGDKMAGRHGNKGVISRIVPVEDMPYLEDGTPVDIILNSLGVPSRMNVGQILETHLGWASVNLGKKIGNILDNIDELTIAHLRNFLDQVYDGQDLKYSIRSMSDDDLLAFAERLRDGVPMAAPVFEGPKDNQISNLLKLADLDVSGQVDLYDGRIGEKFDRKVTVGYIYMLKLHHLVDDKIHARSVGPYGLVTQQPLGGKSHFGGQRFGEMECWALQAYGAAYTLQEMLTVKSDDIVGRVKIYESIIKGDSNFECGIPESFNVMVKELRSLCLDVALKQDKDFLHDRKINN</sequence>
<name>RPOB_EHRRW</name>
<organism>
    <name type="scientific">Ehrlichia ruminantium (strain Welgevonden)</name>
    <dbReference type="NCBI Taxonomy" id="254945"/>
    <lineage>
        <taxon>Bacteria</taxon>
        <taxon>Pseudomonadati</taxon>
        <taxon>Pseudomonadota</taxon>
        <taxon>Alphaproteobacteria</taxon>
        <taxon>Rickettsiales</taxon>
        <taxon>Anaplasmataceae</taxon>
        <taxon>Ehrlichia</taxon>
    </lineage>
</organism>
<reference key="1">
    <citation type="journal article" date="2005" name="Proc. Natl. Acad. Sci. U.S.A.">
        <title>The genome of the heartwater agent Ehrlichia ruminantium contains multiple tandem repeats of actively variable copy number.</title>
        <authorList>
            <person name="Collins N.E."/>
            <person name="Liebenberg J."/>
            <person name="de Villiers E.P."/>
            <person name="Brayton K.A."/>
            <person name="Louw E."/>
            <person name="Pretorius A."/>
            <person name="Faber F.E."/>
            <person name="van Heerden H."/>
            <person name="Josemans A."/>
            <person name="van Kleef M."/>
            <person name="Steyn H.C."/>
            <person name="van Strijp M.F."/>
            <person name="Zweygarth E."/>
            <person name="Jongejan F."/>
            <person name="Maillard J.C."/>
            <person name="Berthier D."/>
            <person name="Botha M."/>
            <person name="Joubert F."/>
            <person name="Corton C.H."/>
            <person name="Thomson N.R."/>
            <person name="Allsopp M.T."/>
            <person name="Allsopp B.A."/>
        </authorList>
    </citation>
    <scope>NUCLEOTIDE SEQUENCE [LARGE SCALE GENOMIC DNA]</scope>
    <source>
        <strain>Welgevonden</strain>
    </source>
</reference>
<reference key="2">
    <citation type="journal article" date="2006" name="J. Bacteriol.">
        <title>Comparative genomic analysis of three strains of Ehrlichia ruminantium reveals an active process of genome size plasticity.</title>
        <authorList>
            <person name="Frutos R."/>
            <person name="Viari A."/>
            <person name="Ferraz C."/>
            <person name="Morgat A."/>
            <person name="Eychenie S."/>
            <person name="Kandassamy Y."/>
            <person name="Chantal I."/>
            <person name="Bensaid A."/>
            <person name="Coissac E."/>
            <person name="Vachiery N."/>
            <person name="Demaille J."/>
            <person name="Martinez D."/>
        </authorList>
    </citation>
    <scope>NUCLEOTIDE SEQUENCE [LARGE SCALE GENOMIC DNA]</scope>
    <source>
        <strain>Welgevonden</strain>
    </source>
</reference>
<proteinExistence type="inferred from homology"/>
<gene>
    <name evidence="1" type="primary">rpoB</name>
    <name type="ordered locus">Erum1720</name>
    <name type="ordered locus">ERWE_CDS_01710</name>
</gene>
<accession>Q5HC05</accession>
<accession>Q5FCV5</accession>
<keyword id="KW-0240">DNA-directed RNA polymerase</keyword>
<keyword id="KW-0548">Nucleotidyltransferase</keyword>
<keyword id="KW-0804">Transcription</keyword>
<keyword id="KW-0808">Transferase</keyword>
<feature type="chain" id="PRO_0000224056" description="DNA-directed RNA polymerase subunit beta">
    <location>
        <begin position="1"/>
        <end position="1380"/>
    </location>
</feature>
<comment type="function">
    <text evidence="1">DNA-dependent RNA polymerase catalyzes the transcription of DNA into RNA using the four ribonucleoside triphosphates as substrates.</text>
</comment>
<comment type="catalytic activity">
    <reaction evidence="1">
        <text>RNA(n) + a ribonucleoside 5'-triphosphate = RNA(n+1) + diphosphate</text>
        <dbReference type="Rhea" id="RHEA:21248"/>
        <dbReference type="Rhea" id="RHEA-COMP:14527"/>
        <dbReference type="Rhea" id="RHEA-COMP:17342"/>
        <dbReference type="ChEBI" id="CHEBI:33019"/>
        <dbReference type="ChEBI" id="CHEBI:61557"/>
        <dbReference type="ChEBI" id="CHEBI:140395"/>
        <dbReference type="EC" id="2.7.7.6"/>
    </reaction>
</comment>
<comment type="subunit">
    <text evidence="1">The RNAP catalytic core consists of 2 alpha, 1 beta, 1 beta' and 1 omega subunit. When a sigma factor is associated with the core the holoenzyme is formed, which can initiate transcription.</text>
</comment>
<comment type="similarity">
    <text evidence="1">Belongs to the RNA polymerase beta chain family.</text>
</comment>
<protein>
    <recommendedName>
        <fullName evidence="1">DNA-directed RNA polymerase subunit beta</fullName>
        <shortName evidence="1">RNAP subunit beta</shortName>
        <ecNumber evidence="1">2.7.7.6</ecNumber>
    </recommendedName>
    <alternativeName>
        <fullName evidence="1">RNA polymerase subunit beta</fullName>
    </alternativeName>
    <alternativeName>
        <fullName evidence="1">Transcriptase subunit beta</fullName>
    </alternativeName>
</protein>
<evidence type="ECO:0000255" key="1">
    <source>
        <dbReference type="HAMAP-Rule" id="MF_01321"/>
    </source>
</evidence>